<accession>B9DS53</accession>
<feature type="chain" id="PRO_1000190784" description="L-lactate dehydrogenase">
    <location>
        <begin position="1"/>
        <end position="327"/>
    </location>
</feature>
<feature type="active site" description="Proton acceptor" evidence="1">
    <location>
        <position position="179"/>
    </location>
</feature>
<feature type="binding site" evidence="1">
    <location>
        <position position="18"/>
    </location>
    <ligand>
        <name>NAD(+)</name>
        <dbReference type="ChEBI" id="CHEBI:57540"/>
    </ligand>
</feature>
<feature type="binding site" evidence="1">
    <location>
        <position position="39"/>
    </location>
    <ligand>
        <name>NAD(+)</name>
        <dbReference type="ChEBI" id="CHEBI:57540"/>
    </ligand>
</feature>
<feature type="binding site" evidence="1">
    <location>
        <position position="44"/>
    </location>
    <ligand>
        <name>NAD(+)</name>
        <dbReference type="ChEBI" id="CHEBI:57540"/>
    </ligand>
</feature>
<feature type="binding site" evidence="1">
    <location>
        <position position="69"/>
    </location>
    <ligand>
        <name>NAD(+)</name>
        <dbReference type="ChEBI" id="CHEBI:57540"/>
    </ligand>
</feature>
<feature type="binding site" evidence="1">
    <location>
        <begin position="83"/>
        <end position="84"/>
    </location>
    <ligand>
        <name>NAD(+)</name>
        <dbReference type="ChEBI" id="CHEBI:57540"/>
    </ligand>
</feature>
<feature type="binding site" evidence="1">
    <location>
        <position position="86"/>
    </location>
    <ligand>
        <name>substrate</name>
    </ligand>
</feature>
<feature type="binding site" evidence="1">
    <location>
        <position position="92"/>
    </location>
    <ligand>
        <name>substrate</name>
    </ligand>
</feature>
<feature type="binding site" evidence="1">
    <location>
        <begin position="122"/>
        <end position="124"/>
    </location>
    <ligand>
        <name>NAD(+)</name>
        <dbReference type="ChEBI" id="CHEBI:57540"/>
    </ligand>
</feature>
<feature type="binding site" evidence="1">
    <location>
        <begin position="124"/>
        <end position="127"/>
    </location>
    <ligand>
        <name>substrate</name>
    </ligand>
</feature>
<feature type="binding site" evidence="1">
    <location>
        <position position="147"/>
    </location>
    <ligand>
        <name>NAD(+)</name>
        <dbReference type="ChEBI" id="CHEBI:57540"/>
    </ligand>
</feature>
<feature type="binding site" evidence="1">
    <location>
        <begin position="152"/>
        <end position="155"/>
    </location>
    <ligand>
        <name>substrate</name>
    </ligand>
</feature>
<feature type="binding site" evidence="1">
    <location>
        <position position="157"/>
    </location>
    <ligand>
        <name>beta-D-fructose 1,6-bisphosphate</name>
        <dbReference type="ChEBI" id="CHEBI:32966"/>
        <note>allosteric activator</note>
    </ligand>
</feature>
<feature type="binding site" evidence="1">
    <location>
        <position position="172"/>
    </location>
    <ligand>
        <name>beta-D-fructose 1,6-bisphosphate</name>
        <dbReference type="ChEBI" id="CHEBI:32966"/>
        <note>allosteric activator</note>
    </ligand>
</feature>
<feature type="binding site" evidence="1">
    <location>
        <position position="233"/>
    </location>
    <ligand>
        <name>substrate</name>
    </ligand>
</feature>
<feature type="modified residue" description="Phosphotyrosine" evidence="1">
    <location>
        <position position="224"/>
    </location>
</feature>
<comment type="function">
    <text evidence="1">Catalyzes the conversion of lactate to pyruvate.</text>
</comment>
<comment type="catalytic activity">
    <reaction evidence="1">
        <text>(S)-lactate + NAD(+) = pyruvate + NADH + H(+)</text>
        <dbReference type="Rhea" id="RHEA:23444"/>
        <dbReference type="ChEBI" id="CHEBI:15361"/>
        <dbReference type="ChEBI" id="CHEBI:15378"/>
        <dbReference type="ChEBI" id="CHEBI:16651"/>
        <dbReference type="ChEBI" id="CHEBI:57540"/>
        <dbReference type="ChEBI" id="CHEBI:57945"/>
        <dbReference type="EC" id="1.1.1.27"/>
    </reaction>
</comment>
<comment type="activity regulation">
    <text evidence="1">Allosterically activated by fructose 1,6-bisphosphate (FBP).</text>
</comment>
<comment type="pathway">
    <text evidence="1">Fermentation; pyruvate fermentation to lactate; (S)-lactate from pyruvate: step 1/1.</text>
</comment>
<comment type="subunit">
    <text evidence="1">Homotetramer.</text>
</comment>
<comment type="subcellular location">
    <subcellularLocation>
        <location evidence="1">Cytoplasm</location>
    </subcellularLocation>
</comment>
<comment type="similarity">
    <text evidence="1">Belongs to the LDH/MDH superfamily. LDH family.</text>
</comment>
<gene>
    <name evidence="1" type="primary">ldh</name>
    <name type="ordered locus">SUB0879</name>
</gene>
<proteinExistence type="inferred from homology"/>
<organism>
    <name type="scientific">Streptococcus uberis (strain ATCC BAA-854 / 0140J)</name>
    <dbReference type="NCBI Taxonomy" id="218495"/>
    <lineage>
        <taxon>Bacteria</taxon>
        <taxon>Bacillati</taxon>
        <taxon>Bacillota</taxon>
        <taxon>Bacilli</taxon>
        <taxon>Lactobacillales</taxon>
        <taxon>Streptococcaceae</taxon>
        <taxon>Streptococcus</taxon>
    </lineage>
</organism>
<keyword id="KW-0021">Allosteric enzyme</keyword>
<keyword id="KW-0963">Cytoplasm</keyword>
<keyword id="KW-0520">NAD</keyword>
<keyword id="KW-0560">Oxidoreductase</keyword>
<keyword id="KW-0597">Phosphoprotein</keyword>
<keyword id="KW-1185">Reference proteome</keyword>
<evidence type="ECO:0000255" key="1">
    <source>
        <dbReference type="HAMAP-Rule" id="MF_00488"/>
    </source>
</evidence>
<dbReference type="EC" id="1.1.1.27" evidence="1"/>
<dbReference type="EMBL" id="AM946015">
    <property type="protein sequence ID" value="CAR41947.1"/>
    <property type="molecule type" value="Genomic_DNA"/>
</dbReference>
<dbReference type="RefSeq" id="WP_012658381.1">
    <property type="nucleotide sequence ID" value="NC_012004.1"/>
</dbReference>
<dbReference type="SMR" id="B9DS53"/>
<dbReference type="STRING" id="218495.SUB0879"/>
<dbReference type="KEGG" id="sub:SUB0879"/>
<dbReference type="eggNOG" id="COG0039">
    <property type="taxonomic scope" value="Bacteria"/>
</dbReference>
<dbReference type="HOGENOM" id="CLU_045401_1_1_9"/>
<dbReference type="OrthoDB" id="9802969at2"/>
<dbReference type="UniPathway" id="UPA00554">
    <property type="reaction ID" value="UER00611"/>
</dbReference>
<dbReference type="Proteomes" id="UP000000449">
    <property type="component" value="Chromosome"/>
</dbReference>
<dbReference type="GO" id="GO:0005737">
    <property type="term" value="C:cytoplasm"/>
    <property type="evidence" value="ECO:0007669"/>
    <property type="project" value="UniProtKB-SubCell"/>
</dbReference>
<dbReference type="GO" id="GO:0004459">
    <property type="term" value="F:L-lactate dehydrogenase activity"/>
    <property type="evidence" value="ECO:0007669"/>
    <property type="project" value="UniProtKB-UniRule"/>
</dbReference>
<dbReference type="GO" id="GO:0006096">
    <property type="term" value="P:glycolytic process"/>
    <property type="evidence" value="ECO:0007669"/>
    <property type="project" value="UniProtKB-UniRule"/>
</dbReference>
<dbReference type="GO" id="GO:0006089">
    <property type="term" value="P:lactate metabolic process"/>
    <property type="evidence" value="ECO:0007669"/>
    <property type="project" value="TreeGrafter"/>
</dbReference>
<dbReference type="CDD" id="cd05291">
    <property type="entry name" value="HicDH_like"/>
    <property type="match status" value="1"/>
</dbReference>
<dbReference type="FunFam" id="3.40.50.720:FF:000018">
    <property type="entry name" value="Malate dehydrogenase"/>
    <property type="match status" value="1"/>
</dbReference>
<dbReference type="Gene3D" id="3.90.110.10">
    <property type="entry name" value="Lactate dehydrogenase/glycoside hydrolase, family 4, C-terminal"/>
    <property type="match status" value="1"/>
</dbReference>
<dbReference type="Gene3D" id="3.40.50.720">
    <property type="entry name" value="NAD(P)-binding Rossmann-like Domain"/>
    <property type="match status" value="1"/>
</dbReference>
<dbReference type="HAMAP" id="MF_00488">
    <property type="entry name" value="Lactate_dehydrog"/>
    <property type="match status" value="1"/>
</dbReference>
<dbReference type="InterPro" id="IPR001557">
    <property type="entry name" value="L-lactate/malate_DH"/>
</dbReference>
<dbReference type="InterPro" id="IPR011304">
    <property type="entry name" value="L-lactate_DH"/>
</dbReference>
<dbReference type="InterPro" id="IPR018177">
    <property type="entry name" value="L-lactate_DH_AS"/>
</dbReference>
<dbReference type="InterPro" id="IPR022383">
    <property type="entry name" value="Lactate/malate_DH_C"/>
</dbReference>
<dbReference type="InterPro" id="IPR001236">
    <property type="entry name" value="Lactate/malate_DH_N"/>
</dbReference>
<dbReference type="InterPro" id="IPR015955">
    <property type="entry name" value="Lactate_DH/Glyco_Ohase_4_C"/>
</dbReference>
<dbReference type="InterPro" id="IPR036291">
    <property type="entry name" value="NAD(P)-bd_dom_sf"/>
</dbReference>
<dbReference type="NCBIfam" id="TIGR01771">
    <property type="entry name" value="L-LDH-NAD"/>
    <property type="match status" value="1"/>
</dbReference>
<dbReference type="NCBIfam" id="NF000824">
    <property type="entry name" value="PRK00066.1"/>
    <property type="match status" value="1"/>
</dbReference>
<dbReference type="PANTHER" id="PTHR43128">
    <property type="entry name" value="L-2-HYDROXYCARBOXYLATE DEHYDROGENASE (NAD(P)(+))"/>
    <property type="match status" value="1"/>
</dbReference>
<dbReference type="PANTHER" id="PTHR43128:SF16">
    <property type="entry name" value="L-LACTATE DEHYDROGENASE"/>
    <property type="match status" value="1"/>
</dbReference>
<dbReference type="Pfam" id="PF02866">
    <property type="entry name" value="Ldh_1_C"/>
    <property type="match status" value="1"/>
</dbReference>
<dbReference type="Pfam" id="PF00056">
    <property type="entry name" value="Ldh_1_N"/>
    <property type="match status" value="1"/>
</dbReference>
<dbReference type="PIRSF" id="PIRSF000102">
    <property type="entry name" value="Lac_mal_DH"/>
    <property type="match status" value="1"/>
</dbReference>
<dbReference type="PRINTS" id="PR00086">
    <property type="entry name" value="LLDHDRGNASE"/>
</dbReference>
<dbReference type="SUPFAM" id="SSF56327">
    <property type="entry name" value="LDH C-terminal domain-like"/>
    <property type="match status" value="1"/>
</dbReference>
<dbReference type="SUPFAM" id="SSF51735">
    <property type="entry name" value="NAD(P)-binding Rossmann-fold domains"/>
    <property type="match status" value="1"/>
</dbReference>
<dbReference type="PROSITE" id="PS00064">
    <property type="entry name" value="L_LDH"/>
    <property type="match status" value="1"/>
</dbReference>
<protein>
    <recommendedName>
        <fullName evidence="1">L-lactate dehydrogenase</fullName>
        <shortName evidence="1">L-LDH</shortName>
        <ecNumber evidence="1">1.1.1.27</ecNumber>
    </recommendedName>
</protein>
<name>LDH_STRU0</name>
<sequence length="327" mass="35482">MTATKQHKKVILVGDGAVGSSYAFALVTQNIAQELGIIDIFKEKTQGDAEDLSHALAFTSPKKIYAAEYSDCHDADLVVLTAGAPQKPGETRLDLVEKNLRINKEVVTQIVASGFNGIFLVAANPVDVLTYSTWKFSGFPKERVIGSGTSLDSARFRQALADKIGVDARSVHAYIMGEHGDSEFAVWSHANVAGVKLEQWLQDNRDIDEQGLIDLFVSVRDAAYSIINKKGATFYGIAVALARITKAILDDENAVLPLSVFQEGQYEGVEDCYIGQPAIVGAYGVVRPVNIPLNDAELQKMQASAKQLKDIIDEAFAKEEFASVAKN</sequence>
<reference key="1">
    <citation type="journal article" date="2009" name="BMC Genomics">
        <title>Evidence for niche adaptation in the genome of the bovine pathogen Streptococcus uberis.</title>
        <authorList>
            <person name="Ward P.N."/>
            <person name="Holden M.T.G."/>
            <person name="Leigh J.A."/>
            <person name="Lennard N."/>
            <person name="Bignell A."/>
            <person name="Barron A."/>
            <person name="Clark L."/>
            <person name="Quail M.A."/>
            <person name="Woodward J."/>
            <person name="Barrell B.G."/>
            <person name="Egan S.A."/>
            <person name="Field T.R."/>
            <person name="Maskell D."/>
            <person name="Kehoe M."/>
            <person name="Dowson C.G."/>
            <person name="Chanter N."/>
            <person name="Whatmore A.M."/>
            <person name="Bentley S.D."/>
            <person name="Parkhill J."/>
        </authorList>
    </citation>
    <scope>NUCLEOTIDE SEQUENCE [LARGE SCALE GENOMIC DNA]</scope>
    <source>
        <strain>ATCC BAA-854 / 0140J</strain>
    </source>
</reference>